<reference key="1">
    <citation type="journal article" date="2010" name="Plant J.">
        <title>Medicago truncatula Vapyrin is a novel protein required for arbuscular mycorrhizal symbiosis.</title>
        <authorList>
            <person name="Pumplin N."/>
            <person name="Mondo S.J."/>
            <person name="Topp S."/>
            <person name="Starker C.G."/>
            <person name="Gantt J.S."/>
            <person name="Harrison M.J."/>
        </authorList>
    </citation>
    <scope>NUCLEOTIDE SEQUENCE [MRNA]</scope>
    <scope>TISSUE SPECIFICITY</scope>
</reference>
<reference key="2">
    <citation type="journal article" date="2011" name="Nature">
        <title>The Medicago genome provides insight into the evolution of rhizobial symbioses.</title>
        <authorList>
            <person name="Young N.D."/>
            <person name="Debelle F."/>
            <person name="Oldroyd G.E.D."/>
            <person name="Geurts R."/>
            <person name="Cannon S.B."/>
            <person name="Udvardi M.K."/>
            <person name="Benedito V.A."/>
            <person name="Mayer K.F.X."/>
            <person name="Gouzy J."/>
            <person name="Schoof H."/>
            <person name="Van de Peer Y."/>
            <person name="Proost S."/>
            <person name="Cook D.R."/>
            <person name="Meyers B.C."/>
            <person name="Spannagl M."/>
            <person name="Cheung F."/>
            <person name="De Mita S."/>
            <person name="Krishnakumar V."/>
            <person name="Gundlach H."/>
            <person name="Zhou S."/>
            <person name="Mudge J."/>
            <person name="Bharti A.K."/>
            <person name="Murray J.D."/>
            <person name="Naoumkina M.A."/>
            <person name="Rosen B."/>
            <person name="Silverstein K.A.T."/>
            <person name="Tang H."/>
            <person name="Rombauts S."/>
            <person name="Zhao P.X."/>
            <person name="Zhou P."/>
            <person name="Barbe V."/>
            <person name="Bardou P."/>
            <person name="Bechner M."/>
            <person name="Bellec A."/>
            <person name="Berger A."/>
            <person name="Berges H."/>
            <person name="Bidwell S."/>
            <person name="Bisseling T."/>
            <person name="Choisne N."/>
            <person name="Couloux A."/>
            <person name="Denny R."/>
            <person name="Deshpande S."/>
            <person name="Dai X."/>
            <person name="Doyle J.J."/>
            <person name="Dudez A.-M."/>
            <person name="Farmer A.D."/>
            <person name="Fouteau S."/>
            <person name="Franken C."/>
            <person name="Gibelin C."/>
            <person name="Gish J."/>
            <person name="Goldstein S."/>
            <person name="Gonzalez A.J."/>
            <person name="Green P.J."/>
            <person name="Hallab A."/>
            <person name="Hartog M."/>
            <person name="Hua A."/>
            <person name="Humphray S.J."/>
            <person name="Jeong D.-H."/>
            <person name="Jing Y."/>
            <person name="Jocker A."/>
            <person name="Kenton S.M."/>
            <person name="Kim D.-J."/>
            <person name="Klee K."/>
            <person name="Lai H."/>
            <person name="Lang C."/>
            <person name="Lin S."/>
            <person name="Macmil S.L."/>
            <person name="Magdelenat G."/>
            <person name="Matthews L."/>
            <person name="McCorrison J."/>
            <person name="Monaghan E.L."/>
            <person name="Mun J.-H."/>
            <person name="Najar F.Z."/>
            <person name="Nicholson C."/>
            <person name="Noirot C."/>
            <person name="O'Bleness M."/>
            <person name="Paule C.R."/>
            <person name="Poulain J."/>
            <person name="Prion F."/>
            <person name="Qin B."/>
            <person name="Qu C."/>
            <person name="Retzel E.F."/>
            <person name="Riddle C."/>
            <person name="Sallet E."/>
            <person name="Samain S."/>
            <person name="Samson N."/>
            <person name="Sanders I."/>
            <person name="Saurat O."/>
            <person name="Scarpelli C."/>
            <person name="Schiex T."/>
            <person name="Segurens B."/>
            <person name="Severin A.J."/>
            <person name="Sherrier D.J."/>
            <person name="Shi R."/>
            <person name="Sims S."/>
            <person name="Singer S.R."/>
            <person name="Sinharoy S."/>
            <person name="Sterck L."/>
            <person name="Viollet A."/>
            <person name="Wang B.-B."/>
            <person name="Wang K."/>
            <person name="Wang M."/>
            <person name="Wang X."/>
            <person name="Warfsmann J."/>
            <person name="Weissenbach J."/>
            <person name="White D.D."/>
            <person name="White J.D."/>
            <person name="Wiley G.B."/>
            <person name="Wincker P."/>
            <person name="Xing Y."/>
            <person name="Yang L."/>
            <person name="Yao Z."/>
            <person name="Ying F."/>
            <person name="Zhai J."/>
            <person name="Zhou L."/>
            <person name="Zuber A."/>
            <person name="Denarie J."/>
            <person name="Dixon R.A."/>
            <person name="May G.D."/>
            <person name="Schwartz D.C."/>
            <person name="Rogers J."/>
            <person name="Quetier F."/>
            <person name="Town C.D."/>
            <person name="Roe B.A."/>
        </authorList>
    </citation>
    <scope>NUCLEOTIDE SEQUENCE [LARGE SCALE GENOMIC DNA]</scope>
    <source>
        <strain>cv. Jemalong A17</strain>
    </source>
</reference>
<reference key="3">
    <citation type="journal article" date="2014" name="BMC Genomics">
        <title>An improved genome release (version Mt4.0) for the model legume Medicago truncatula.</title>
        <authorList>
            <person name="Tang H."/>
            <person name="Krishnakumar V."/>
            <person name="Bidwell S."/>
            <person name="Rosen B."/>
            <person name="Chan A."/>
            <person name="Zhou S."/>
            <person name="Gentzbittel L."/>
            <person name="Childs K.L."/>
            <person name="Yandell M."/>
            <person name="Gundlach H."/>
            <person name="Mayer K.F."/>
            <person name="Schwartz D.C."/>
            <person name="Town C.D."/>
        </authorList>
    </citation>
    <scope>GENOME REANNOTATION</scope>
    <source>
        <strain>cv. Jemalong A17</strain>
    </source>
</reference>
<reference key="4">
    <citation type="journal article" date="2018" name="Nat. Plants">
        <title>Whole-genome landscape of Medicago truncatula symbiotic genes.</title>
        <authorList>
            <person name="Pecrix Y."/>
            <person name="Staton S.E."/>
            <person name="Sallet E."/>
            <person name="Lelandais-Briere C."/>
            <person name="Moreau S."/>
            <person name="Carrere S."/>
            <person name="Blein T."/>
            <person name="Jardinaud M.F."/>
            <person name="Latrasse D."/>
            <person name="Zouine M."/>
            <person name="Zahm M."/>
            <person name="Kreplak J."/>
            <person name="Mayjonade B."/>
            <person name="Satge C."/>
            <person name="Perez M."/>
            <person name="Cauet S."/>
            <person name="Marande W."/>
            <person name="Chantry-Darmon C."/>
            <person name="Lopez-Roques C."/>
            <person name="Bouchez O."/>
            <person name="Berard A."/>
            <person name="Debelle F."/>
            <person name="Munos S."/>
            <person name="Bendahmane A."/>
            <person name="Berges H."/>
            <person name="Niebel A."/>
            <person name="Buitink J."/>
            <person name="Frugier F."/>
            <person name="Benhamed M."/>
            <person name="Crespi M."/>
            <person name="Gouzy J."/>
            <person name="Gamas P."/>
        </authorList>
    </citation>
    <scope>NUCLEOTIDE SEQUENCE [LARGE SCALE GENOMIC DNA]</scope>
    <source>
        <strain>cv. Jemalong A17</strain>
    </source>
</reference>
<accession>D3J163</accession>
<sequence length="464" mass="51003">MDRLVKTEFNEVNLNFQKNQKCSSSFKLTNLMHTMSVAVSLTTTNPTTFSINKPLSVIPPLSSSTYTLHLTNLNQPPLSEPADVITVRTSMLPTGKATTDDLRRLFNKPGPHVFRDAVITVILVGPTVAEYVISNYETRNLFTKAISVCTKSNLTNLMKPAVESGKVEYVTDLITAGGDVNFRDSNGKSLIPFAIRTGKLAVLKLLVANGCRINDSVDFVLHEAAIIDRVDVVKFLFESFCDELDVNSVNREMMTPIHVSASEGHVSLIEFFVSIGGNANAVDSRRWTPLHHAASRNHLKAVEFLLENSDVKYARELNGKTAFEIASESGHTRLFGVLRWGDALLQAARVDDVHALKKCLGEGAEVNRKDQNGWTPLHWASFKGRIKSVKVLLEHGAEVDSVDDAGYTPLHCAAEAGHLQVALVLIAHGGCQTNLKSFQHVSPIATFQKHVSLHYSTKKSETFA</sequence>
<feature type="chain" id="PRO_0000450030" description="Protein VAPYRIN-LIKE">
    <location>
        <begin position="1"/>
        <end position="464"/>
    </location>
</feature>
<feature type="domain" description="MSP" evidence="3">
    <location>
        <begin position="3"/>
        <end position="124"/>
    </location>
</feature>
<feature type="repeat" description="ANK 1" evidence="2">
    <location>
        <begin position="153"/>
        <end position="182"/>
    </location>
</feature>
<feature type="repeat" description="ANK 2" evidence="2">
    <location>
        <begin position="186"/>
        <end position="215"/>
    </location>
</feature>
<feature type="repeat" description="ANK 3" evidence="2">
    <location>
        <begin position="217"/>
        <end position="246"/>
    </location>
</feature>
<feature type="repeat" description="ANK 4" evidence="2">
    <location>
        <begin position="252"/>
        <end position="281"/>
    </location>
</feature>
<feature type="repeat" description="ANK 5" evidence="2">
    <location>
        <begin position="285"/>
        <end position="314"/>
    </location>
</feature>
<feature type="repeat" description="ANK 6" evidence="2">
    <location>
        <begin position="318"/>
        <end position="347"/>
    </location>
</feature>
<feature type="repeat" description="ANK 7" evidence="2">
    <location>
        <begin position="349"/>
        <end position="368"/>
    </location>
</feature>
<feature type="repeat" description="ANK 8" evidence="2">
    <location>
        <begin position="372"/>
        <end position="401"/>
    </location>
</feature>
<feature type="repeat" description="ANK 9" evidence="2">
    <location>
        <begin position="405"/>
        <end position="435"/>
    </location>
</feature>
<gene>
    <name evidence="5" type="primary">VPYL</name>
    <name evidence="7" type="ordered locus">MTR_1g089180</name>
    <name evidence="8" type="ORF">MtrunA17_Chr1g0196261</name>
</gene>
<protein>
    <recommendedName>
        <fullName evidence="5">Protein VAPYRIN-LIKE</fullName>
        <shortName evidence="5">MtVpyl</shortName>
    </recommendedName>
</protein>
<proteinExistence type="evidence at transcript level"/>
<organism>
    <name type="scientific">Medicago truncatula</name>
    <name type="common">Barrel medic</name>
    <name type="synonym">Medicago tribuloides</name>
    <dbReference type="NCBI Taxonomy" id="3880"/>
    <lineage>
        <taxon>Eukaryota</taxon>
        <taxon>Viridiplantae</taxon>
        <taxon>Streptophyta</taxon>
        <taxon>Embryophyta</taxon>
        <taxon>Tracheophyta</taxon>
        <taxon>Spermatophyta</taxon>
        <taxon>Magnoliopsida</taxon>
        <taxon>eudicotyledons</taxon>
        <taxon>Gunneridae</taxon>
        <taxon>Pentapetalae</taxon>
        <taxon>rosids</taxon>
        <taxon>fabids</taxon>
        <taxon>Fabales</taxon>
        <taxon>Fabaceae</taxon>
        <taxon>Papilionoideae</taxon>
        <taxon>50 kb inversion clade</taxon>
        <taxon>NPAAA clade</taxon>
        <taxon>Hologalegina</taxon>
        <taxon>IRL clade</taxon>
        <taxon>Trifolieae</taxon>
        <taxon>Medicago</taxon>
    </lineage>
</organism>
<name>VPYL_MEDTR</name>
<comment type="function">
    <text evidence="1">May be involved in arbuscular mycorrhizal (AM) symbiosis with AM fungi and in nitrogen-fixing rhizobial bacteria symbiosis leading to the formation of root nodules.</text>
</comment>
<comment type="subcellular location">
    <subcellularLocation>
        <location evidence="1">Cytoplasm</location>
    </subcellularLocation>
    <subcellularLocation>
        <location evidence="1">Nucleus</location>
    </subcellularLocation>
    <subcellularLocation>
        <location evidence="1">Cell membrane</location>
        <topology evidence="6">Peripheral membrane protein</topology>
        <orientation evidence="6">Cytoplasmic side</orientation>
    </subcellularLocation>
</comment>
<comment type="tissue specificity">
    <text evidence="4">Expressed in roots.</text>
</comment>
<keyword id="KW-0040">ANK repeat</keyword>
<keyword id="KW-1003">Cell membrane</keyword>
<keyword id="KW-0963">Cytoplasm</keyword>
<keyword id="KW-0472">Membrane</keyword>
<keyword id="KW-0539">Nucleus</keyword>
<keyword id="KW-1185">Reference proteome</keyword>
<keyword id="KW-0677">Repeat</keyword>
<evidence type="ECO:0000250" key="1">
    <source>
        <dbReference type="UniProtKB" id="D3J162"/>
    </source>
</evidence>
<evidence type="ECO:0000255" key="2"/>
<evidence type="ECO:0000255" key="3">
    <source>
        <dbReference type="PROSITE-ProRule" id="PRU00132"/>
    </source>
</evidence>
<evidence type="ECO:0000269" key="4">
    <source>
    </source>
</evidence>
<evidence type="ECO:0000303" key="5">
    <source>
    </source>
</evidence>
<evidence type="ECO:0000305" key="6"/>
<evidence type="ECO:0000312" key="7">
    <source>
        <dbReference type="EMBL" id="AES61829.1"/>
    </source>
</evidence>
<evidence type="ECO:0000312" key="8">
    <source>
        <dbReference type="EMBL" id="RHN81180.1"/>
    </source>
</evidence>
<dbReference type="EMBL" id="GQ423210">
    <property type="protein sequence ID" value="ADC33496.1"/>
    <property type="molecule type" value="mRNA"/>
</dbReference>
<dbReference type="EMBL" id="CM001217">
    <property type="protein sequence ID" value="AES61829.1"/>
    <property type="molecule type" value="Genomic_DNA"/>
</dbReference>
<dbReference type="EMBL" id="PSQE01000001">
    <property type="protein sequence ID" value="RHN81180.1"/>
    <property type="molecule type" value="Genomic_DNA"/>
</dbReference>
<dbReference type="RefSeq" id="XP_003591578.1">
    <property type="nucleotide sequence ID" value="XM_003591530.2"/>
</dbReference>
<dbReference type="SMR" id="D3J163"/>
<dbReference type="STRING" id="3880.D3J163"/>
<dbReference type="PaxDb" id="3880-AES61829"/>
<dbReference type="EnsemblPlants" id="rna5186">
    <property type="protein sequence ID" value="RHN81180.1"/>
    <property type="gene ID" value="gene5186"/>
</dbReference>
<dbReference type="GeneID" id="11415982"/>
<dbReference type="Gramene" id="rna5186">
    <property type="protein sequence ID" value="RHN81180.1"/>
    <property type="gene ID" value="gene5186"/>
</dbReference>
<dbReference type="KEGG" id="mtr:11415982"/>
<dbReference type="eggNOG" id="KOG4177">
    <property type="taxonomic scope" value="Eukaryota"/>
</dbReference>
<dbReference type="HOGENOM" id="CLU_000134_53_1_1"/>
<dbReference type="OMA" id="PGPHVFR"/>
<dbReference type="OrthoDB" id="194358at2759"/>
<dbReference type="Proteomes" id="UP000002051">
    <property type="component" value="Chromosome 1"/>
</dbReference>
<dbReference type="Proteomes" id="UP000265566">
    <property type="component" value="Chromosome 1"/>
</dbReference>
<dbReference type="GO" id="GO:0005737">
    <property type="term" value="C:cytoplasm"/>
    <property type="evidence" value="ECO:0000250"/>
    <property type="project" value="UniProtKB"/>
</dbReference>
<dbReference type="GO" id="GO:0005634">
    <property type="term" value="C:nucleus"/>
    <property type="evidence" value="ECO:0007669"/>
    <property type="project" value="UniProtKB-SubCell"/>
</dbReference>
<dbReference type="GO" id="GO:0005886">
    <property type="term" value="C:plasma membrane"/>
    <property type="evidence" value="ECO:0007669"/>
    <property type="project" value="UniProtKB-SubCell"/>
</dbReference>
<dbReference type="Gene3D" id="1.25.40.20">
    <property type="entry name" value="Ankyrin repeat-containing domain"/>
    <property type="match status" value="2"/>
</dbReference>
<dbReference type="Gene3D" id="2.60.40.10">
    <property type="entry name" value="Immunoglobulins"/>
    <property type="match status" value="1"/>
</dbReference>
<dbReference type="InterPro" id="IPR002110">
    <property type="entry name" value="Ankyrin_rpt"/>
</dbReference>
<dbReference type="InterPro" id="IPR036770">
    <property type="entry name" value="Ankyrin_rpt-contain_sf"/>
</dbReference>
<dbReference type="InterPro" id="IPR013783">
    <property type="entry name" value="Ig-like_fold"/>
</dbReference>
<dbReference type="InterPro" id="IPR000535">
    <property type="entry name" value="MSP_dom"/>
</dbReference>
<dbReference type="InterPro" id="IPR008962">
    <property type="entry name" value="PapD-like_sf"/>
</dbReference>
<dbReference type="PANTHER" id="PTHR24171:SF10">
    <property type="entry name" value="ANKYRIN REPEAT DOMAIN-CONTAINING PROTEIN 29-LIKE"/>
    <property type="match status" value="1"/>
</dbReference>
<dbReference type="PANTHER" id="PTHR24171">
    <property type="entry name" value="ANKYRIN REPEAT DOMAIN-CONTAINING PROTEIN 39-RELATED"/>
    <property type="match status" value="1"/>
</dbReference>
<dbReference type="Pfam" id="PF12796">
    <property type="entry name" value="Ank_2"/>
    <property type="match status" value="2"/>
</dbReference>
<dbReference type="SMART" id="SM00248">
    <property type="entry name" value="ANK"/>
    <property type="match status" value="6"/>
</dbReference>
<dbReference type="SUPFAM" id="SSF48403">
    <property type="entry name" value="Ankyrin repeat"/>
    <property type="match status" value="1"/>
</dbReference>
<dbReference type="SUPFAM" id="SSF49354">
    <property type="entry name" value="PapD-like"/>
    <property type="match status" value="1"/>
</dbReference>
<dbReference type="PROSITE" id="PS50297">
    <property type="entry name" value="ANK_REP_REGION"/>
    <property type="match status" value="1"/>
</dbReference>
<dbReference type="PROSITE" id="PS50088">
    <property type="entry name" value="ANK_REPEAT"/>
    <property type="match status" value="4"/>
</dbReference>
<dbReference type="PROSITE" id="PS50202">
    <property type="entry name" value="MSP"/>
    <property type="match status" value="1"/>
</dbReference>